<name>GAI_SOLLC</name>
<sequence length="588" mass="64526">MKRDRDRDREREKRAFSNGAVSSGKSKIWEEDEEEKPDAGMDELLAVLGYKVKSSDMADVAQKLEQLEMAMGTTMEDGITHLSTDTVHKNPSDMAGWVQSMLSSISTNFDMCNQENDVLVSGCGSSSSIIDFSQNHRTSTISDDDLRAIPGGAVFNSDSNKRHRSTTSSFSTTSSSMVTDSSATRPVVLVDSQETGVRLVHTLMACAEAVQQENLTLADQLVRHIGILAVSQSGAMRKVATYFAEALARRIYKIYPQDSMESSYTDVLQMHFYETCPYLKFAHFTANQAILEAFTGCNKVHVIDFSLKQGMQWPALMQALALRPGGPPAFRLTGIGPPQPDNTDALQQVGWKLAQLAETIGVEFEFRGFVANSLADLDATILDIRPSETEAVAINSVFELHRLLSRPGAIEKVLNSIKQINPKIVTLVEQEANHNAGVFIDRFNEALHYYSTMFDSLESSGSSSSASPTGILPQPPVNNQDLVMSEVYLGRQICNVVACEGSDRVERHETLNQWRVRMNSSGFDPVHLGSNAFKQASMLLALFAGGDGYRVEENDGCLMLGWHTRPLIATSAWKLLPDSGTGAGEVEL</sequence>
<reference key="1">
    <citation type="journal article" date="2004" name="Plant Physiol.">
        <title>Down-regulation of della genes is not essential for germination of tomato, soybean, and Arabidopsis seeds.</title>
        <authorList>
            <person name="Bassel G.W."/>
            <person name="Zielinska E."/>
            <person name="Mullen R.T."/>
            <person name="Bewley J.D."/>
        </authorList>
    </citation>
    <scope>NUCLEOTIDE SEQUENCE [MRNA]</scope>
    <scope>FUNCTION</scope>
    <scope>TISSUE SPECIFICITY</scope>
</reference>
<protein>
    <recommendedName>
        <fullName>DELLA protein GAI</fullName>
    </recommendedName>
    <alternativeName>
        <fullName>Gibberellic acid-insensitive mutant protein</fullName>
    </alternativeName>
</protein>
<comment type="function">
    <text evidence="1 4">Probable transcriptional regulator that acts as a repressor of the gibberellin (GA) signaling pathway. Probably acts by participating in large multiprotein complexes that repress transcription of GA-inducible genes. Upon GA application, it is degraded by the proteasome, allowing the GA signaling pathway (By similarity). Its degradation is not essential for germination.</text>
</comment>
<comment type="subcellular location">
    <subcellularLocation>
        <location evidence="1">Nucleus</location>
    </subcellularLocation>
</comment>
<comment type="tissue specificity">
    <text evidence="4">Expressed in both vegetative and reproductive tissues.</text>
</comment>
<comment type="domain">
    <text evidence="1">The DELLA motif is required for its GA-induced degradation.</text>
</comment>
<comment type="PTM">
    <text evidence="1">Phosphorylated.</text>
</comment>
<comment type="PTM">
    <text evidence="1">Ubiquitinated. Upon GA application it is ubiquitinated, leading to its subsequent degradation (By similarity).</text>
</comment>
<comment type="similarity">
    <text evidence="5">Belongs to the GRAS family. DELLA subfamily.</text>
</comment>
<keyword id="KW-0939">Gibberellin signaling pathway</keyword>
<keyword id="KW-0539">Nucleus</keyword>
<keyword id="KW-0597">Phosphoprotein</keyword>
<keyword id="KW-1185">Reference proteome</keyword>
<keyword id="KW-0678">Repressor</keyword>
<keyword id="KW-0804">Transcription</keyword>
<keyword id="KW-0805">Transcription regulation</keyword>
<keyword id="KW-0832">Ubl conjugation</keyword>
<proteinExistence type="evidence at transcript level"/>
<dbReference type="EMBL" id="AY269087">
    <property type="protein sequence ID" value="AAP22369.1"/>
    <property type="molecule type" value="mRNA"/>
</dbReference>
<dbReference type="RefSeq" id="NP_001234365.1">
    <property type="nucleotide sequence ID" value="NM_001247436.3"/>
</dbReference>
<dbReference type="SMR" id="Q7Y1B6"/>
<dbReference type="FunCoup" id="Q7Y1B6">
    <property type="interactions" value="1613"/>
</dbReference>
<dbReference type="STRING" id="4081.Q7Y1B6"/>
<dbReference type="PaxDb" id="4081-Solyc11g011260.1.1"/>
<dbReference type="EnsemblPlants" id="Solyc11g011260.1.1">
    <property type="protein sequence ID" value="Solyc11g011260.1.1.1"/>
    <property type="gene ID" value="Solyc11g011260.1"/>
</dbReference>
<dbReference type="GeneID" id="543881"/>
<dbReference type="Gramene" id="Solyc11g011260.1.1">
    <property type="protein sequence ID" value="Solyc11g011260.1.1.1"/>
    <property type="gene ID" value="Solyc11g011260.1"/>
</dbReference>
<dbReference type="KEGG" id="sly:543881"/>
<dbReference type="eggNOG" id="ENOG502QPMG">
    <property type="taxonomic scope" value="Eukaryota"/>
</dbReference>
<dbReference type="HOGENOM" id="CLU_011924_4_0_1"/>
<dbReference type="InParanoid" id="Q7Y1B6"/>
<dbReference type="OMA" id="ICNVVAY"/>
<dbReference type="OrthoDB" id="761920at2759"/>
<dbReference type="PhylomeDB" id="Q7Y1B6"/>
<dbReference type="Proteomes" id="UP000004994">
    <property type="component" value="Chromosome 11"/>
</dbReference>
<dbReference type="GO" id="GO:0005634">
    <property type="term" value="C:nucleus"/>
    <property type="evidence" value="ECO:0000318"/>
    <property type="project" value="GO_Central"/>
</dbReference>
<dbReference type="GO" id="GO:0003700">
    <property type="term" value="F:DNA-binding transcription factor activity"/>
    <property type="evidence" value="ECO:0000318"/>
    <property type="project" value="GO_Central"/>
</dbReference>
<dbReference type="GO" id="GO:0043565">
    <property type="term" value="F:sequence-specific DNA binding"/>
    <property type="evidence" value="ECO:0000318"/>
    <property type="project" value="GO_Central"/>
</dbReference>
<dbReference type="GO" id="GO:0009740">
    <property type="term" value="P:gibberellic acid mediated signaling pathway"/>
    <property type="evidence" value="ECO:0007669"/>
    <property type="project" value="UniProtKB-KW"/>
</dbReference>
<dbReference type="GO" id="GO:0042538">
    <property type="term" value="P:hyperosmotic salinity response"/>
    <property type="evidence" value="ECO:0000318"/>
    <property type="project" value="GO_Central"/>
</dbReference>
<dbReference type="GO" id="GO:0009867">
    <property type="term" value="P:jasmonic acid mediated signaling pathway"/>
    <property type="evidence" value="ECO:0000318"/>
    <property type="project" value="GO_Central"/>
</dbReference>
<dbReference type="GO" id="GO:0009938">
    <property type="term" value="P:negative regulation of gibberellic acid mediated signaling pathway"/>
    <property type="evidence" value="ECO:0000318"/>
    <property type="project" value="GO_Central"/>
</dbReference>
<dbReference type="GO" id="GO:0010187">
    <property type="term" value="P:negative regulation of seed germination"/>
    <property type="evidence" value="ECO:0000318"/>
    <property type="project" value="GO_Central"/>
</dbReference>
<dbReference type="GO" id="GO:0006355">
    <property type="term" value="P:regulation of DNA-templated transcription"/>
    <property type="evidence" value="ECO:0000318"/>
    <property type="project" value="GO_Central"/>
</dbReference>
<dbReference type="GO" id="GO:2000377">
    <property type="term" value="P:regulation of reactive oxygen species metabolic process"/>
    <property type="evidence" value="ECO:0000318"/>
    <property type="project" value="GO_Central"/>
</dbReference>
<dbReference type="GO" id="GO:2000033">
    <property type="term" value="P:regulation of seed dormancy process"/>
    <property type="evidence" value="ECO:0000318"/>
    <property type="project" value="GO_Central"/>
</dbReference>
<dbReference type="GO" id="GO:0009737">
    <property type="term" value="P:response to abscisic acid"/>
    <property type="evidence" value="ECO:0000318"/>
    <property type="project" value="GO_Central"/>
</dbReference>
<dbReference type="GO" id="GO:0009723">
    <property type="term" value="P:response to ethylene"/>
    <property type="evidence" value="ECO:0000318"/>
    <property type="project" value="GO_Central"/>
</dbReference>
<dbReference type="GO" id="GO:0009863">
    <property type="term" value="P:salicylic acid mediated signaling pathway"/>
    <property type="evidence" value="ECO:0000318"/>
    <property type="project" value="GO_Central"/>
</dbReference>
<dbReference type="FunFam" id="1.10.10.1290:FF:000001">
    <property type="entry name" value="DELLA protein GAI"/>
    <property type="match status" value="1"/>
</dbReference>
<dbReference type="Gene3D" id="1.10.10.1290">
    <property type="entry name" value="Transcriptional regulator DELLA, N-terminal domain"/>
    <property type="match status" value="1"/>
</dbReference>
<dbReference type="InterPro" id="IPR038088">
    <property type="entry name" value="DELLA_N_sf"/>
</dbReference>
<dbReference type="InterPro" id="IPR021914">
    <property type="entry name" value="TF_DELLA_N"/>
</dbReference>
<dbReference type="InterPro" id="IPR005202">
    <property type="entry name" value="TF_GRAS"/>
</dbReference>
<dbReference type="PANTHER" id="PTHR31636">
    <property type="entry name" value="OSJNBA0084A10.13 PROTEIN-RELATED"/>
    <property type="match status" value="1"/>
</dbReference>
<dbReference type="Pfam" id="PF12041">
    <property type="entry name" value="DELLA"/>
    <property type="match status" value="1"/>
</dbReference>
<dbReference type="Pfam" id="PF03514">
    <property type="entry name" value="GRAS"/>
    <property type="match status" value="1"/>
</dbReference>
<dbReference type="SMART" id="SM01129">
    <property type="entry name" value="DELLA"/>
    <property type="match status" value="1"/>
</dbReference>
<dbReference type="PROSITE" id="PS50985">
    <property type="entry name" value="GRAS"/>
    <property type="match status" value="1"/>
</dbReference>
<organism>
    <name type="scientific">Solanum lycopersicum</name>
    <name type="common">Tomato</name>
    <name type="synonym">Lycopersicon esculentum</name>
    <dbReference type="NCBI Taxonomy" id="4081"/>
    <lineage>
        <taxon>Eukaryota</taxon>
        <taxon>Viridiplantae</taxon>
        <taxon>Streptophyta</taxon>
        <taxon>Embryophyta</taxon>
        <taxon>Tracheophyta</taxon>
        <taxon>Spermatophyta</taxon>
        <taxon>Magnoliopsida</taxon>
        <taxon>eudicotyledons</taxon>
        <taxon>Gunneridae</taxon>
        <taxon>Pentapetalae</taxon>
        <taxon>asterids</taxon>
        <taxon>lamiids</taxon>
        <taxon>Solanales</taxon>
        <taxon>Solanaceae</taxon>
        <taxon>Solanoideae</taxon>
        <taxon>Solaneae</taxon>
        <taxon>Solanum</taxon>
        <taxon>Solanum subgen. Lycopersicon</taxon>
    </lineage>
</organism>
<accession>Q7Y1B6</accession>
<evidence type="ECO:0000250" key="1"/>
<evidence type="ECO:0000255" key="2">
    <source>
        <dbReference type="PROSITE-ProRule" id="PRU01191"/>
    </source>
</evidence>
<evidence type="ECO:0000256" key="3">
    <source>
        <dbReference type="SAM" id="MobiDB-lite"/>
    </source>
</evidence>
<evidence type="ECO:0000269" key="4">
    <source>
    </source>
</evidence>
<evidence type="ECO:0000305" key="5"/>
<gene>
    <name type="primary">GAI</name>
</gene>
<feature type="chain" id="PRO_0000132245" description="DELLA protein GAI">
    <location>
        <begin position="1"/>
        <end position="588"/>
    </location>
</feature>
<feature type="domain" description="GRAS" evidence="2">
    <location>
        <begin position="190"/>
        <end position="574"/>
    </location>
</feature>
<feature type="region of interest" description="Disordered" evidence="3">
    <location>
        <begin position="1"/>
        <end position="38"/>
    </location>
</feature>
<feature type="region of interest" description="Disordered" evidence="3">
    <location>
        <begin position="152"/>
        <end position="177"/>
    </location>
</feature>
<feature type="region of interest" description="Leucine repeat I (LRI)" evidence="2">
    <location>
        <begin position="197"/>
        <end position="251"/>
    </location>
</feature>
<feature type="region of interest" description="VHIID" evidence="2">
    <location>
        <begin position="269"/>
        <end position="334"/>
    </location>
</feature>
<feature type="region of interest" description="Leucine repeat II (LRII)" evidence="2">
    <location>
        <begin position="348"/>
        <end position="380"/>
    </location>
</feature>
<feature type="region of interest" description="PFYRE" evidence="2">
    <location>
        <begin position="392"/>
        <end position="495"/>
    </location>
</feature>
<feature type="region of interest" description="SAW" evidence="2">
    <location>
        <begin position="498"/>
        <end position="574"/>
    </location>
</feature>
<feature type="short sequence motif" description="DELLA motif">
    <location>
        <begin position="42"/>
        <end position="46"/>
    </location>
</feature>
<feature type="short sequence motif" description="VHIID" evidence="2">
    <location>
        <begin position="300"/>
        <end position="304"/>
    </location>
</feature>
<feature type="short sequence motif" description="LXXLL motif" evidence="2">
    <location>
        <begin position="400"/>
        <end position="404"/>
    </location>
</feature>
<feature type="compositionally biased region" description="Basic and acidic residues" evidence="3">
    <location>
        <begin position="1"/>
        <end position="15"/>
    </location>
</feature>
<feature type="compositionally biased region" description="Low complexity" evidence="3">
    <location>
        <begin position="166"/>
        <end position="177"/>
    </location>
</feature>